<proteinExistence type="inferred from homology"/>
<feature type="chain" id="PRO_0000325990" description="Photosystem I assembly protein Ycf4">
    <location>
        <begin position="1"/>
        <end position="187"/>
    </location>
</feature>
<feature type="transmembrane region" description="Helical" evidence="1">
    <location>
        <begin position="25"/>
        <end position="45"/>
    </location>
</feature>
<feature type="transmembrane region" description="Helical" evidence="1">
    <location>
        <begin position="69"/>
        <end position="89"/>
    </location>
</feature>
<dbReference type="EMBL" id="CP000393">
    <property type="protein sequence ID" value="ABG49967.1"/>
    <property type="molecule type" value="Genomic_DNA"/>
</dbReference>
<dbReference type="RefSeq" id="WP_011610362.1">
    <property type="nucleotide sequence ID" value="NC_008312.1"/>
</dbReference>
<dbReference type="STRING" id="203124.Tery_0512"/>
<dbReference type="KEGG" id="ter:Tery_0512"/>
<dbReference type="eggNOG" id="ENOG502Z7YX">
    <property type="taxonomic scope" value="Bacteria"/>
</dbReference>
<dbReference type="HOGENOM" id="CLU_095465_0_0_3"/>
<dbReference type="OrthoDB" id="7059574at2"/>
<dbReference type="GO" id="GO:0009522">
    <property type="term" value="C:photosystem I"/>
    <property type="evidence" value="ECO:0007669"/>
    <property type="project" value="InterPro"/>
</dbReference>
<dbReference type="GO" id="GO:0031676">
    <property type="term" value="C:plasma membrane-derived thylakoid membrane"/>
    <property type="evidence" value="ECO:0007669"/>
    <property type="project" value="UniProtKB-SubCell"/>
</dbReference>
<dbReference type="GO" id="GO:0015979">
    <property type="term" value="P:photosynthesis"/>
    <property type="evidence" value="ECO:0007669"/>
    <property type="project" value="UniProtKB-UniRule"/>
</dbReference>
<dbReference type="HAMAP" id="MF_00437">
    <property type="entry name" value="Ycf4"/>
    <property type="match status" value="1"/>
</dbReference>
<dbReference type="InterPro" id="IPR003359">
    <property type="entry name" value="PSI_Ycf4_assembly"/>
</dbReference>
<dbReference type="NCBIfam" id="NF002712">
    <property type="entry name" value="PRK02542.1"/>
    <property type="match status" value="1"/>
</dbReference>
<dbReference type="Pfam" id="PF02392">
    <property type="entry name" value="Ycf4"/>
    <property type="match status" value="1"/>
</dbReference>
<reference key="1">
    <citation type="journal article" date="2015" name="Proc. Natl. Acad. Sci. U.S.A.">
        <title>Trichodesmium genome maintains abundant, widespread noncoding DNA in situ, despite oligotrophic lifestyle.</title>
        <authorList>
            <person name="Walworth N."/>
            <person name="Pfreundt U."/>
            <person name="Nelson W.C."/>
            <person name="Mincer T."/>
            <person name="Heidelberg J.F."/>
            <person name="Fu F."/>
            <person name="Waterbury J.B."/>
            <person name="Glavina del Rio T."/>
            <person name="Goodwin L."/>
            <person name="Kyrpides N.C."/>
            <person name="Land M.L."/>
            <person name="Woyke T."/>
            <person name="Hutchins D.A."/>
            <person name="Hess W.R."/>
            <person name="Webb E.A."/>
        </authorList>
    </citation>
    <scope>NUCLEOTIDE SEQUENCE [LARGE SCALE GENOMIC DNA]</scope>
    <source>
        <strain>IMS101</strain>
    </source>
</reference>
<accession>Q118V7</accession>
<protein>
    <recommendedName>
        <fullName evidence="1">Photosystem I assembly protein Ycf4</fullName>
    </recommendedName>
</protein>
<gene>
    <name evidence="1" type="primary">ycf4</name>
    <name type="ordered locus">Tery_0512</name>
</gene>
<sequence length="187" mass="20938">MTTQTSTGDRLVHQEIIGSRRLSNYLWAIIVTMGGIGFLLSGISSYLKVNLLIVADPTQLNFLPQGIAMSFYGLLGTIYGIFLWLTVIWDLGGGYNDFNQESGQIMIFRRGFPGKNRKVEFNCTTENVQSIKVDIKEGLNPRRAIYLCLKDRRQIPLTRVGQPLALSKLENEAAQLAKFLQVPLEGL</sequence>
<evidence type="ECO:0000255" key="1">
    <source>
        <dbReference type="HAMAP-Rule" id="MF_00437"/>
    </source>
</evidence>
<name>YCF4_TRIEI</name>
<keyword id="KW-0472">Membrane</keyword>
<keyword id="KW-0602">Photosynthesis</keyword>
<keyword id="KW-0793">Thylakoid</keyword>
<keyword id="KW-0812">Transmembrane</keyword>
<keyword id="KW-1133">Transmembrane helix</keyword>
<comment type="function">
    <text evidence="1">Seems to be required for the assembly of the photosystem I complex.</text>
</comment>
<comment type="subcellular location">
    <subcellularLocation>
        <location evidence="1">Cellular thylakoid membrane</location>
        <topology evidence="1">Multi-pass membrane protein</topology>
    </subcellularLocation>
</comment>
<comment type="similarity">
    <text evidence="1">Belongs to the Ycf4 family.</text>
</comment>
<organism>
    <name type="scientific">Trichodesmium erythraeum (strain IMS101)</name>
    <dbReference type="NCBI Taxonomy" id="203124"/>
    <lineage>
        <taxon>Bacteria</taxon>
        <taxon>Bacillati</taxon>
        <taxon>Cyanobacteriota</taxon>
        <taxon>Cyanophyceae</taxon>
        <taxon>Oscillatoriophycideae</taxon>
        <taxon>Oscillatoriales</taxon>
        <taxon>Microcoleaceae</taxon>
        <taxon>Trichodesmium</taxon>
    </lineage>
</organism>